<feature type="chain" id="PRO_0000114814" description="Ubiquitin">
    <location>
        <begin position="1"/>
        <end position="76"/>
    </location>
</feature>
<feature type="chain" id="PRO_0000137671" description="Small ribosomal subunit protein eS31">
    <location>
        <begin position="77"/>
        <end position="155"/>
    </location>
</feature>
<feature type="domain" description="Ubiquitin-like" evidence="2">
    <location>
        <begin position="1"/>
        <end position="76"/>
    </location>
</feature>
<feature type="zinc finger region" description="C4-type">
    <location>
        <begin position="121"/>
        <end position="144"/>
    </location>
</feature>
<feature type="site" description="Interacts with activating enzyme">
    <location>
        <position position="54"/>
    </location>
</feature>
<feature type="site" description="Essential for function">
    <location>
        <position position="68"/>
    </location>
</feature>
<feature type="site" description="Interacts with activating enzyme">
    <location>
        <position position="72"/>
    </location>
</feature>
<feature type="cross-link" description="Glycyl lysine isopeptide (Lys-Gly) (interchain with G-Cter in ubiquitin)" evidence="1">
    <location>
        <position position="48"/>
    </location>
</feature>
<feature type="cross-link" description="Glycyl lysine isopeptide (Gly-Lys) (interchain with K-? in acceptor proteins)" evidence="2">
    <location>
        <position position="76"/>
    </location>
</feature>
<sequence>MQIFVKTLTGKTITLEVEPSDTIENVKAKIQDKEGIPPDQQRLIFAGKQLEDGRTLSDYNIQKESTLHLVLRLRGGAKKRKKKNYSTPKKIKHKKKKVKLAVLRFYKVDENGKIHRLRRECTGEQCGAGVFMAVMEDRHYCGKCHSTMVFKDDDK</sequence>
<reference key="1">
    <citation type="journal article" date="1990" name="Neuron">
        <title>Activation of polyubiquitin gene expression during developmentally programmed cell death.</title>
        <authorList>
            <person name="Schwartz L.M."/>
            <person name="Myer A."/>
            <person name="Kosz L."/>
            <person name="Engelstein M."/>
            <person name="Maier C."/>
        </authorList>
    </citation>
    <scope>NUCLEOTIDE SEQUENCE [MRNA]</scope>
</reference>
<reference key="2">
    <citation type="journal article" date="1990" name="Nucleic Acids Res.">
        <title>Characterization of a ubiquitin-fusion gene from the tobacco hawkmoth, Manduca sexta.</title>
        <authorList>
            <person name="Bishoff S.T."/>
            <person name="Schwartz L.M."/>
        </authorList>
    </citation>
    <scope>NUCLEOTIDE SEQUENCE [MRNA]</scope>
    <source>
        <tissue>Pupae</tissue>
    </source>
</reference>
<dbReference type="EMBL" id="X53524">
    <property type="protein sequence ID" value="CAA37599.1"/>
    <property type="molecule type" value="mRNA"/>
</dbReference>
<dbReference type="PIR" id="JH0302">
    <property type="entry name" value="JH0302"/>
</dbReference>
<dbReference type="PIR" id="S13136">
    <property type="entry name" value="UQWO7A"/>
</dbReference>
<dbReference type="RefSeq" id="XP_037296245.1">
    <property type="nucleotide sequence ID" value="XM_037440348.1"/>
</dbReference>
<dbReference type="SMR" id="P29504"/>
<dbReference type="EnsemblMetazoa" id="XM_037440348.1">
    <property type="protein sequence ID" value="XP_037296245.1"/>
    <property type="gene ID" value="LOC115445921"/>
</dbReference>
<dbReference type="GeneID" id="115445921"/>
<dbReference type="OrthoDB" id="428577at2759"/>
<dbReference type="GO" id="GO:0005737">
    <property type="term" value="C:cytoplasm"/>
    <property type="evidence" value="ECO:0007669"/>
    <property type="project" value="UniProtKB-SubCell"/>
</dbReference>
<dbReference type="GO" id="GO:0005634">
    <property type="term" value="C:nucleus"/>
    <property type="evidence" value="ECO:0007669"/>
    <property type="project" value="UniProtKB-SubCell"/>
</dbReference>
<dbReference type="GO" id="GO:1990904">
    <property type="term" value="C:ribonucleoprotein complex"/>
    <property type="evidence" value="ECO:0007669"/>
    <property type="project" value="UniProtKB-KW"/>
</dbReference>
<dbReference type="GO" id="GO:0005840">
    <property type="term" value="C:ribosome"/>
    <property type="evidence" value="ECO:0007669"/>
    <property type="project" value="UniProtKB-KW"/>
</dbReference>
<dbReference type="GO" id="GO:0003735">
    <property type="term" value="F:structural constituent of ribosome"/>
    <property type="evidence" value="ECO:0007669"/>
    <property type="project" value="InterPro"/>
</dbReference>
<dbReference type="GO" id="GO:0008270">
    <property type="term" value="F:zinc ion binding"/>
    <property type="evidence" value="ECO:0007669"/>
    <property type="project" value="UniProtKB-KW"/>
</dbReference>
<dbReference type="GO" id="GO:0006412">
    <property type="term" value="P:translation"/>
    <property type="evidence" value="ECO:0007669"/>
    <property type="project" value="InterPro"/>
</dbReference>
<dbReference type="CDD" id="cd01803">
    <property type="entry name" value="Ubl_ubiquitin"/>
    <property type="match status" value="1"/>
</dbReference>
<dbReference type="FunFam" id="3.10.20.90:FF:000008">
    <property type="entry name" value="Ubiquitin-40S ribosomal protein S27a"/>
    <property type="match status" value="1"/>
</dbReference>
<dbReference type="Gene3D" id="6.20.50.150">
    <property type="match status" value="1"/>
</dbReference>
<dbReference type="Gene3D" id="3.10.20.90">
    <property type="entry name" value="Phosphatidylinositol 3-kinase Catalytic Subunit, Chain A, domain 1"/>
    <property type="match status" value="1"/>
</dbReference>
<dbReference type="InterPro" id="IPR002906">
    <property type="entry name" value="Ribosomal_eS31"/>
</dbReference>
<dbReference type="InterPro" id="IPR038582">
    <property type="entry name" value="Ribosomal_eS31_euk-type_sf"/>
</dbReference>
<dbReference type="InterPro" id="IPR011332">
    <property type="entry name" value="Ribosomal_zn-bd"/>
</dbReference>
<dbReference type="InterPro" id="IPR000626">
    <property type="entry name" value="Ubiquitin-like_dom"/>
</dbReference>
<dbReference type="InterPro" id="IPR029071">
    <property type="entry name" value="Ubiquitin-like_domsf"/>
</dbReference>
<dbReference type="InterPro" id="IPR019954">
    <property type="entry name" value="Ubiquitin_CS"/>
</dbReference>
<dbReference type="InterPro" id="IPR019956">
    <property type="entry name" value="Ubiquitin_dom"/>
</dbReference>
<dbReference type="InterPro" id="IPR050158">
    <property type="entry name" value="Ubiquitin_ubiquitin-like"/>
</dbReference>
<dbReference type="PANTHER" id="PTHR10666">
    <property type="entry name" value="UBIQUITIN"/>
    <property type="match status" value="1"/>
</dbReference>
<dbReference type="Pfam" id="PF01599">
    <property type="entry name" value="Ribosomal_S27"/>
    <property type="match status" value="1"/>
</dbReference>
<dbReference type="Pfam" id="PF00240">
    <property type="entry name" value="ubiquitin"/>
    <property type="match status" value="1"/>
</dbReference>
<dbReference type="PRINTS" id="PR00348">
    <property type="entry name" value="UBIQUITIN"/>
</dbReference>
<dbReference type="SMART" id="SM01402">
    <property type="entry name" value="Ribosomal_S27"/>
    <property type="match status" value="1"/>
</dbReference>
<dbReference type="SMART" id="SM00213">
    <property type="entry name" value="UBQ"/>
    <property type="match status" value="1"/>
</dbReference>
<dbReference type="SUPFAM" id="SSF54236">
    <property type="entry name" value="Ubiquitin-like"/>
    <property type="match status" value="1"/>
</dbReference>
<dbReference type="SUPFAM" id="SSF57829">
    <property type="entry name" value="Zn-binding ribosomal proteins"/>
    <property type="match status" value="1"/>
</dbReference>
<dbReference type="PROSITE" id="PS00299">
    <property type="entry name" value="UBIQUITIN_1"/>
    <property type="match status" value="1"/>
</dbReference>
<dbReference type="PROSITE" id="PS50053">
    <property type="entry name" value="UBIQUITIN_2"/>
    <property type="match status" value="1"/>
</dbReference>
<evidence type="ECO:0000250" key="1"/>
<evidence type="ECO:0000255" key="2">
    <source>
        <dbReference type="PROSITE-ProRule" id="PRU00214"/>
    </source>
</evidence>
<evidence type="ECO:0000305" key="3"/>
<keyword id="KW-0963">Cytoplasm</keyword>
<keyword id="KW-1017">Isopeptide bond</keyword>
<keyword id="KW-0479">Metal-binding</keyword>
<keyword id="KW-0539">Nucleus</keyword>
<keyword id="KW-0687">Ribonucleoprotein</keyword>
<keyword id="KW-0689">Ribosomal protein</keyword>
<keyword id="KW-0832">Ubl conjugation</keyword>
<keyword id="KW-0862">Zinc</keyword>
<keyword id="KW-0863">Zinc-finger</keyword>
<proteinExistence type="evidence at transcript level"/>
<comment type="function">
    <molecule>Ubiquitin</molecule>
    <text evidence="1">Exists either covalently attached to another protein, or free (unanchored). When covalently bound, it is conjugated to target proteins via an isopeptide bond either as a monomer (monoubiquitin), a polymer linked via different Lys residues of the ubiquitin (polyubiquitin chains) or a linear polymer linked via the initiator Met of the ubiquitin (linear polyubiquitin chains). Polyubiquitin chains, when attached to a target protein, have different functions depending on the Lys residue of the ubiquitin that is linked: Lys-48-linked is involved in protein degradation via the proteasome. Linear polymer chains formed via attachment by the initiator Met lead to cell signaling. Ubiquitin is usually conjugated to Lys residues of target proteins, however, in rare cases, conjugation to Cys or Ser residues has been observed. When polyubiquitin is free (unanchored-polyubiquitin), it also has distinct roles, such as in activation of protein kinases, and in signaling (By similarity).</text>
</comment>
<comment type="function">
    <molecule>Small ribosomal subunit protein eS31</molecule>
    <text>Component of the 40S subunit of the ribosome.</text>
</comment>
<comment type="subunit">
    <molecule>Small ribosomal subunit protein eS31</molecule>
    <text evidence="1">Part of the 40S ribosomal subunit.</text>
</comment>
<comment type="subcellular location">
    <molecule>Ubiquitin</molecule>
    <subcellularLocation>
        <location evidence="1">Cytoplasm</location>
    </subcellularLocation>
    <subcellularLocation>
        <location evidence="1">Nucleus</location>
    </subcellularLocation>
</comment>
<comment type="miscellaneous">
    <text>Ubiquitin is synthesized as a polyubiquitin precursor with exact head to tail repeats, the number of repeats differs between species. In some species there is a final amino-acid after the last repeat. Some ubiquitin genes contain a single copy of ubiquitin fused to a ribosomal protein (either eL40 or eS31).</text>
</comment>
<comment type="similarity">
    <text evidence="3">In the N-terminal section; belongs to the ubiquitin family.</text>
</comment>
<comment type="similarity">
    <text evidence="3">In the C-terminal section; belongs to the eukaryotic ribosomal protein eS31 family.</text>
</comment>
<organism>
    <name type="scientific">Manduca sexta</name>
    <name type="common">Tobacco hawkmoth</name>
    <name type="synonym">Tobacco hornworm</name>
    <dbReference type="NCBI Taxonomy" id="7130"/>
    <lineage>
        <taxon>Eukaryota</taxon>
        <taxon>Metazoa</taxon>
        <taxon>Ecdysozoa</taxon>
        <taxon>Arthropoda</taxon>
        <taxon>Hexapoda</taxon>
        <taxon>Insecta</taxon>
        <taxon>Pterygota</taxon>
        <taxon>Neoptera</taxon>
        <taxon>Endopterygota</taxon>
        <taxon>Lepidoptera</taxon>
        <taxon>Glossata</taxon>
        <taxon>Ditrysia</taxon>
        <taxon>Bombycoidea</taxon>
        <taxon>Sphingidae</taxon>
        <taxon>Sphinginae</taxon>
        <taxon>Sphingini</taxon>
        <taxon>Manduca</taxon>
    </lineage>
</organism>
<name>RS27A_MANSE</name>
<accession>P29504</accession>
<accession>P68196</accession>
<accession>Q9VKW6</accession>
<accession>Q9VQX7</accession>
<accession>Q9VZL4</accession>
<protein>
    <recommendedName>
        <fullName evidence="3">Ubiquitin-ribosomal protein eS31 fusion protein</fullName>
    </recommendedName>
    <component>
        <recommendedName>
            <fullName>Ubiquitin</fullName>
        </recommendedName>
    </component>
    <component>
        <recommendedName>
            <fullName evidence="3">Small ribosomal subunit protein eS31</fullName>
        </recommendedName>
        <alternativeName>
            <fullName>40S ribosomal protein S27a</fullName>
        </alternativeName>
    </component>
</protein>